<proteinExistence type="evidence at protein level"/>
<feature type="chain" id="PRO_0000457071" description="Glucan endo-1,3-beta-D-glucosidase">
    <location>
        <begin position="1"/>
        <end position="773"/>
    </location>
</feature>
<feature type="domain" description="GH81" evidence="4">
    <location>
        <begin position="1"/>
        <end position="647"/>
    </location>
</feature>
<feature type="region of interest" description="beta-sandwich subdomain" evidence="4">
    <location>
        <begin position="1"/>
        <end position="194"/>
    </location>
</feature>
<feature type="region of interest" description="alpha/beta subdomain" evidence="4">
    <location>
        <begin position="195"/>
        <end position="288"/>
    </location>
</feature>
<feature type="region of interest" description="(alpha/beta)6 barrel subdomain" evidence="4">
    <location>
        <begin position="298"/>
        <end position="647"/>
    </location>
</feature>
<feature type="active site" evidence="4">
    <location>
        <position position="402"/>
    </location>
</feature>
<feature type="active site" evidence="4 8">
    <location>
        <position position="479"/>
    </location>
</feature>
<feature type="active site" evidence="4">
    <location>
        <position position="483"/>
    </location>
</feature>
<feature type="binding site" evidence="5 11">
    <location>
        <position position="31"/>
    </location>
    <ligand>
        <name>Mg(2+)</name>
        <dbReference type="ChEBI" id="CHEBI:18420"/>
        <label>1</label>
    </ligand>
</feature>
<feature type="binding site" evidence="5 11">
    <location>
        <position position="34"/>
    </location>
    <ligand>
        <name>Mg(2+)</name>
        <dbReference type="ChEBI" id="CHEBI:18420"/>
        <label>1</label>
    </ligand>
</feature>
<feature type="binding site" evidence="5 11">
    <location>
        <position position="35"/>
    </location>
    <ligand>
        <name>Mg(2+)</name>
        <dbReference type="ChEBI" id="CHEBI:18420"/>
        <label>1</label>
    </ligand>
</feature>
<feature type="binding site" evidence="5 11">
    <location>
        <position position="36"/>
    </location>
    <ligand>
        <name>Mg(2+)</name>
        <dbReference type="ChEBI" id="CHEBI:18420"/>
        <label>1</label>
    </ligand>
</feature>
<feature type="binding site" evidence="5 11">
    <location>
        <position position="89"/>
    </location>
    <ligand>
        <name>Mg(2+)</name>
        <dbReference type="ChEBI" id="CHEBI:18420"/>
        <label>1</label>
    </ligand>
</feature>
<feature type="binding site" evidence="2">
    <location>
        <position position="327"/>
    </location>
    <ligand>
        <name>(1,3-beta-D-glucosyl)n</name>
        <dbReference type="ChEBI" id="CHEBI:37671"/>
    </ligand>
</feature>
<feature type="binding site" evidence="2">
    <location>
        <position position="331"/>
    </location>
    <ligand>
        <name>(1,3-beta-D-glucosyl)n</name>
        <dbReference type="ChEBI" id="CHEBI:37671"/>
    </ligand>
</feature>
<feature type="binding site" evidence="5 11">
    <location>
        <position position="365"/>
    </location>
    <ligand>
        <name>Ca(2+)</name>
        <dbReference type="ChEBI" id="CHEBI:29108"/>
        <label>1</label>
    </ligand>
</feature>
<feature type="binding site" evidence="5 11">
    <location>
        <position position="365"/>
    </location>
    <ligand>
        <name>Ca(2+)</name>
        <dbReference type="ChEBI" id="CHEBI:29108"/>
        <label>2</label>
    </ligand>
</feature>
<feature type="binding site" evidence="5 11">
    <location>
        <position position="368"/>
    </location>
    <ligand>
        <name>Ca(2+)</name>
        <dbReference type="ChEBI" id="CHEBI:29108"/>
        <label>2</label>
    </ligand>
</feature>
<feature type="binding site" evidence="5 11">
    <location>
        <position position="373"/>
    </location>
    <ligand>
        <name>Ca(2+)</name>
        <dbReference type="ChEBI" id="CHEBI:29108"/>
        <label>1</label>
    </ligand>
</feature>
<feature type="binding site" evidence="5 11">
    <location>
        <position position="373"/>
    </location>
    <ligand>
        <name>Ca(2+)</name>
        <dbReference type="ChEBI" id="CHEBI:29108"/>
        <label>2</label>
    </ligand>
</feature>
<feature type="binding site" evidence="5 11">
    <location>
        <position position="376"/>
    </location>
    <ligand>
        <name>Ca(2+)</name>
        <dbReference type="ChEBI" id="CHEBI:29108"/>
        <label>2</label>
    </ligand>
</feature>
<feature type="binding site" evidence="2">
    <location>
        <position position="402"/>
    </location>
    <ligand>
        <name>(1,3-beta-D-glucosyl)n</name>
        <dbReference type="ChEBI" id="CHEBI:37671"/>
    </ligand>
</feature>
<feature type="binding site" evidence="2">
    <location>
        <position position="406"/>
    </location>
    <ligand>
        <name>(1,3-beta-D-glucosyl)n</name>
        <dbReference type="ChEBI" id="CHEBI:37671"/>
    </ligand>
</feature>
<feature type="binding site" evidence="5 11">
    <location>
        <position position="454"/>
    </location>
    <ligand>
        <name>Ca(2+)</name>
        <dbReference type="ChEBI" id="CHEBI:29108"/>
        <label>3</label>
    </ligand>
</feature>
<feature type="binding site" evidence="5 11">
    <location>
        <position position="455"/>
    </location>
    <ligand>
        <name>Ca(2+)</name>
        <dbReference type="ChEBI" id="CHEBI:29108"/>
        <label>3</label>
    </ligand>
</feature>
<feature type="binding site" evidence="5 11">
    <location>
        <position position="457"/>
    </location>
    <ligand>
        <name>Ca(2+)</name>
        <dbReference type="ChEBI" id="CHEBI:29108"/>
        <label>3</label>
    </ligand>
</feature>
<feature type="binding site" evidence="2">
    <location>
        <position position="477"/>
    </location>
    <ligand>
        <name>(1,3-beta-D-glucosyl)n</name>
        <dbReference type="ChEBI" id="CHEBI:37671"/>
    </ligand>
</feature>
<feature type="binding site" evidence="2">
    <location>
        <position position="479"/>
    </location>
    <ligand>
        <name>(1,3-beta-D-glucosyl)n</name>
        <dbReference type="ChEBI" id="CHEBI:37671"/>
    </ligand>
</feature>
<feature type="binding site" evidence="2">
    <location>
        <position position="483"/>
    </location>
    <ligand>
        <name>(1,3-beta-D-glucosyl)n</name>
        <dbReference type="ChEBI" id="CHEBI:37671"/>
    </ligand>
</feature>
<feature type="binding site" evidence="5 11">
    <location>
        <position position="527"/>
    </location>
    <ligand>
        <name>Mg(2+)</name>
        <dbReference type="ChEBI" id="CHEBI:18420"/>
        <label>3</label>
    </ligand>
</feature>
<feature type="binding site" evidence="5 11">
    <location>
        <position position="618"/>
    </location>
    <ligand>
        <name>Mg(2+)</name>
        <dbReference type="ChEBI" id="CHEBI:18420"/>
        <label>2</label>
    </ligand>
</feature>
<feature type="binding site" evidence="5 11">
    <location>
        <position position="619"/>
    </location>
    <ligand>
        <name>Mg(2+)</name>
        <dbReference type="ChEBI" id="CHEBI:18420"/>
        <label>2</label>
    </ligand>
</feature>
<feature type="binding site" evidence="5 11">
    <location>
        <position position="621"/>
    </location>
    <ligand>
        <name>Mg(2+)</name>
        <dbReference type="ChEBI" id="CHEBI:18420"/>
        <label>2</label>
    </ligand>
</feature>
<feature type="binding site" evidence="3">
    <location>
        <position position="712"/>
    </location>
    <ligand>
        <name>Ca(2+)</name>
        <dbReference type="ChEBI" id="CHEBI:29108"/>
        <label>4</label>
    </ligand>
</feature>
<feature type="binding site" evidence="3">
    <location>
        <position position="714"/>
    </location>
    <ligand>
        <name>Ca(2+)</name>
        <dbReference type="ChEBI" id="CHEBI:29108"/>
        <label>4</label>
    </ligand>
</feature>
<feature type="binding site" evidence="3">
    <location>
        <position position="716"/>
    </location>
    <ligand>
        <name>Ca(2+)</name>
        <dbReference type="ChEBI" id="CHEBI:29108"/>
        <label>4</label>
    </ligand>
</feature>
<feature type="binding site" evidence="3">
    <location>
        <position position="717"/>
    </location>
    <ligand>
        <name>Ca(2+)</name>
        <dbReference type="ChEBI" id="CHEBI:29108"/>
        <label>4</label>
    </ligand>
</feature>
<feature type="binding site" evidence="3">
    <location>
        <position position="718"/>
    </location>
    <ligand>
        <name>Ca(2+)</name>
        <dbReference type="ChEBI" id="CHEBI:29108"/>
        <label>4</label>
    </ligand>
</feature>
<feature type="binding site" evidence="3">
    <location>
        <position position="723"/>
    </location>
    <ligand>
        <name>Ca(2+)</name>
        <dbReference type="ChEBI" id="CHEBI:29108"/>
        <label>4</label>
    </ligand>
</feature>
<feature type="binding site" evidence="3">
    <location>
        <position position="748"/>
    </location>
    <ligand>
        <name>Ca(2+)</name>
        <dbReference type="ChEBI" id="CHEBI:29108"/>
        <label>5</label>
    </ligand>
</feature>
<feature type="binding site" evidence="3">
    <location>
        <position position="748"/>
    </location>
    <ligand>
        <name>Ca(2+)</name>
        <dbReference type="ChEBI" id="CHEBI:29108"/>
        <label>6</label>
    </ligand>
</feature>
<feature type="binding site" evidence="3">
    <location>
        <position position="749"/>
    </location>
    <ligand>
        <name>Ca(2+)</name>
        <dbReference type="ChEBI" id="CHEBI:29108"/>
        <label>5</label>
    </ligand>
</feature>
<feature type="binding site" evidence="3">
    <location>
        <position position="750"/>
    </location>
    <ligand>
        <name>Ca(2+)</name>
        <dbReference type="ChEBI" id="CHEBI:29108"/>
        <label>6</label>
    </ligand>
</feature>
<feature type="binding site" evidence="3">
    <location>
        <position position="752"/>
    </location>
    <ligand>
        <name>Ca(2+)</name>
        <dbReference type="ChEBI" id="CHEBI:29108"/>
        <label>6</label>
    </ligand>
</feature>
<feature type="binding site" evidence="3">
    <location>
        <position position="754"/>
    </location>
    <ligand>
        <name>Ca(2+)</name>
        <dbReference type="ChEBI" id="CHEBI:29108"/>
        <label>5</label>
    </ligand>
</feature>
<feature type="binding site" evidence="3">
    <location>
        <position position="754"/>
    </location>
    <ligand>
        <name>Ca(2+)</name>
        <dbReference type="ChEBI" id="CHEBI:29108"/>
        <label>6</label>
    </ligand>
</feature>
<feature type="binding site" evidence="3">
    <location>
        <position position="759"/>
    </location>
    <ligand>
        <name>Ca(2+)</name>
        <dbReference type="ChEBI" id="CHEBI:29108"/>
        <label>5</label>
    </ligand>
</feature>
<feature type="binding site" evidence="3">
    <location>
        <position position="759"/>
    </location>
    <ligand>
        <name>Ca(2+)</name>
        <dbReference type="ChEBI" id="CHEBI:29108"/>
        <label>6</label>
    </ligand>
</feature>
<feature type="mutagenesis site" description="Loss of enzyme activity." evidence="5">
    <original>E</original>
    <variation>A</variation>
    <location>
        <position position="479"/>
    </location>
</feature>
<feature type="turn" evidence="12">
    <location>
        <begin position="27"/>
        <end position="29"/>
    </location>
</feature>
<feature type="helix" evidence="12">
    <location>
        <begin position="30"/>
        <end position="33"/>
    </location>
</feature>
<feature type="strand" evidence="12">
    <location>
        <begin position="34"/>
        <end position="36"/>
    </location>
</feature>
<feature type="strand" evidence="12">
    <location>
        <begin position="46"/>
        <end position="50"/>
    </location>
</feature>
<feature type="strand" evidence="12">
    <location>
        <begin position="53"/>
        <end position="57"/>
    </location>
</feature>
<feature type="strand" evidence="12">
    <location>
        <begin position="65"/>
        <end position="69"/>
    </location>
</feature>
<feature type="strand" evidence="12">
    <location>
        <begin position="75"/>
        <end position="82"/>
    </location>
</feature>
<feature type="strand" evidence="12">
    <location>
        <begin position="90"/>
        <end position="94"/>
    </location>
</feature>
<feature type="strand" evidence="12">
    <location>
        <begin position="96"/>
        <end position="105"/>
    </location>
</feature>
<feature type="strand" evidence="12">
    <location>
        <begin position="108"/>
        <end position="115"/>
    </location>
</feature>
<feature type="strand" evidence="12">
    <location>
        <begin position="119"/>
        <end position="128"/>
    </location>
</feature>
<feature type="strand" evidence="12">
    <location>
        <begin position="130"/>
        <end position="136"/>
    </location>
</feature>
<feature type="strand" evidence="12">
    <location>
        <begin position="139"/>
        <end position="142"/>
    </location>
</feature>
<feature type="strand" evidence="12">
    <location>
        <begin position="148"/>
        <end position="154"/>
    </location>
</feature>
<feature type="strand" evidence="12">
    <location>
        <begin position="157"/>
        <end position="162"/>
    </location>
</feature>
<feature type="strand" evidence="12">
    <location>
        <begin position="168"/>
        <end position="170"/>
    </location>
</feature>
<feature type="strand" evidence="12">
    <location>
        <begin position="174"/>
        <end position="180"/>
    </location>
</feature>
<feature type="strand" evidence="12">
    <location>
        <begin position="187"/>
        <end position="195"/>
    </location>
</feature>
<feature type="helix" evidence="12">
    <location>
        <begin position="198"/>
        <end position="207"/>
    </location>
</feature>
<feature type="strand" evidence="12">
    <location>
        <begin position="210"/>
        <end position="222"/>
    </location>
</feature>
<feature type="turn" evidence="12">
    <location>
        <begin position="223"/>
        <end position="226"/>
    </location>
</feature>
<feature type="strand" evidence="12">
    <location>
        <begin position="227"/>
        <end position="238"/>
    </location>
</feature>
<feature type="strand" evidence="12">
    <location>
        <begin position="240"/>
        <end position="242"/>
    </location>
</feature>
<feature type="strand" evidence="12">
    <location>
        <begin position="247"/>
        <end position="250"/>
    </location>
</feature>
<feature type="helix" evidence="12">
    <location>
        <begin position="252"/>
        <end position="255"/>
    </location>
</feature>
<feature type="strand" evidence="12">
    <location>
        <begin position="267"/>
        <end position="270"/>
    </location>
</feature>
<feature type="strand" evidence="12">
    <location>
        <begin position="273"/>
        <end position="288"/>
    </location>
</feature>
<feature type="helix" evidence="12">
    <location>
        <begin position="304"/>
        <end position="316"/>
    </location>
</feature>
<feature type="turn" evidence="12">
    <location>
        <begin position="317"/>
        <end position="319"/>
    </location>
</feature>
<feature type="helix" evidence="12">
    <location>
        <begin position="326"/>
        <end position="346"/>
    </location>
</feature>
<feature type="helix" evidence="12">
    <location>
        <begin position="349"/>
        <end position="366"/>
    </location>
</feature>
<feature type="strand" evidence="12">
    <location>
        <begin position="375"/>
        <end position="381"/>
    </location>
</feature>
<feature type="turn" evidence="12">
    <location>
        <begin position="382"/>
        <end position="385"/>
    </location>
</feature>
<feature type="strand" evidence="12">
    <location>
        <begin position="386"/>
        <end position="391"/>
    </location>
</feature>
<feature type="turn" evidence="12">
    <location>
        <begin position="394"/>
        <end position="398"/>
    </location>
</feature>
<feature type="helix" evidence="12">
    <location>
        <begin position="403"/>
        <end position="420"/>
    </location>
</feature>
<feature type="helix" evidence="12">
    <location>
        <begin position="422"/>
        <end position="425"/>
    </location>
</feature>
<feature type="turn" evidence="12">
    <location>
        <begin position="427"/>
        <end position="430"/>
    </location>
</feature>
<feature type="helix" evidence="12">
    <location>
        <begin position="431"/>
        <end position="442"/>
    </location>
</feature>
<feature type="strand" evidence="12">
    <location>
        <begin position="455"/>
        <end position="458"/>
    </location>
</feature>
<feature type="turn" evidence="12">
    <location>
        <begin position="459"/>
        <end position="462"/>
    </location>
</feature>
<feature type="strand" evidence="12">
    <location>
        <begin position="477"/>
        <end position="479"/>
    </location>
</feature>
<feature type="helix" evidence="12">
    <location>
        <begin position="481"/>
        <end position="498"/>
    </location>
</feature>
<feature type="helix" evidence="12">
    <location>
        <begin position="501"/>
        <end position="521"/>
    </location>
</feature>
<feature type="strand" evidence="12">
    <location>
        <begin position="540"/>
        <end position="549"/>
    </location>
</feature>
<feature type="helix" evidence="12">
    <location>
        <begin position="557"/>
        <end position="562"/>
    </location>
</feature>
<feature type="turn" evidence="12">
    <location>
        <begin position="563"/>
        <end position="565"/>
    </location>
</feature>
<feature type="helix" evidence="12">
    <location>
        <begin position="572"/>
        <end position="576"/>
    </location>
</feature>
<feature type="helix" evidence="12">
    <location>
        <begin position="579"/>
        <end position="593"/>
    </location>
</feature>
<feature type="strand" evidence="12">
    <location>
        <begin position="595"/>
        <end position="597"/>
    </location>
</feature>
<feature type="helix" evidence="12">
    <location>
        <begin position="602"/>
        <end position="609"/>
    </location>
</feature>
<feature type="turn" evidence="12">
    <location>
        <begin position="610"/>
        <end position="612"/>
    </location>
</feature>
<feature type="helix" evidence="12">
    <location>
        <begin position="614"/>
        <end position="620"/>
    </location>
</feature>
<feature type="helix" evidence="12">
    <location>
        <begin position="633"/>
        <end position="646"/>
    </location>
</feature>
<feature type="strand" evidence="12">
    <location>
        <begin position="655"/>
        <end position="665"/>
    </location>
</feature>
<feature type="strand" evidence="12">
    <location>
        <begin position="668"/>
        <end position="675"/>
    </location>
</feature>
<feature type="strand" evidence="12">
    <location>
        <begin position="677"/>
        <end position="679"/>
    </location>
</feature>
<feature type="strand" evidence="12">
    <location>
        <begin position="681"/>
        <end position="685"/>
    </location>
</feature>
<feature type="strand" evidence="12">
    <location>
        <begin position="690"/>
        <end position="693"/>
    </location>
</feature>
<feature type="strand" evidence="12">
    <location>
        <begin position="697"/>
        <end position="702"/>
    </location>
</feature>
<protein>
    <recommendedName>
        <fullName evidence="7">Glucan endo-1,3-beta-D-glucosidase</fullName>
        <shortName evidence="7">Endo-1,3-beta-glucanase</shortName>
        <ecNumber evidence="5">3.2.1.39</ecNumber>
    </recommendedName>
    <alternativeName>
        <fullName evidence="6">CtLam81A</fullName>
    </alternativeName>
    <alternativeName>
        <fullName evidence="7">Laminarinase</fullName>
    </alternativeName>
</protein>
<reference evidence="10" key="1">
    <citation type="journal article" date="2013" name="Biotechnol. Biofuels">
        <title>Global transcriptome analysis of Clostridium thermocellum ATCC 27405 during growth on dilute acid pretreated Populus and switchgrass.</title>
        <authorList>
            <person name="Wilson C.M."/>
            <person name="Rodriguez M. Jr."/>
            <person name="Johnson C.M."/>
            <person name="Martin S.L."/>
            <person name="Chu T.M."/>
            <person name="Wolfinger R.D."/>
            <person name="Hauser L.J."/>
            <person name="Land M.L."/>
            <person name="Klingeman D.M."/>
            <person name="Syed M.H."/>
            <person name="Ragauskas A.J."/>
            <person name="Tschaplinski T.J."/>
            <person name="Mielenz J.R."/>
            <person name="Brown S.D."/>
        </authorList>
    </citation>
    <scope>NUCLEOTIDE SEQUENCE [LARGE SCALE GENOMIC DNA]</scope>
    <source>
        <strain evidence="10">ATCC 27405 / DSM 1237 / JCM 9322 / NBRC 103400 / NCIMB 10682 / NRRL B-4536 / VPI 7372</strain>
    </source>
</reference>
<reference evidence="11" key="2">
    <citation type="journal article" date="2018" name="Int. J. Biol. Macromol.">
        <title>Novel insights into the degradation of beta-1,3-glucans by the cellulosome of Clostridium thermocellum revealed by structure and function studies of a family 81 glycoside hydrolase.</title>
        <authorList>
            <person name="Kumar K."/>
            <person name="Correia M.A.S."/>
            <person name="Pires V.M.R."/>
            <person name="Dhillon A."/>
            <person name="Sharma K."/>
            <person name="Rajulapati V."/>
            <person name="Fontes C.M.G.A."/>
            <person name="Carvalho A.L."/>
            <person name="Goyal A."/>
        </authorList>
    </citation>
    <scope>X-RAY CRYSTALLOGRAPHY (1.40 ANGSTROMS) OF 2-704 OF ALA-479 IN COMPLEX WITH CALCIUM AND MAGNESIUM</scope>
    <scope>FUNCTION</scope>
    <scope>CATALYTIC ACTIVITY</scope>
    <scope>BIOPHYSICOCHEMICAL PROPERTIES</scope>
    <scope>ACTIVE SITE</scope>
    <scope>MUTAGENESIS OF GLU-479</scope>
</reference>
<keyword id="KW-0002">3D-structure</keyword>
<keyword id="KW-0106">Calcium</keyword>
<keyword id="KW-0119">Carbohydrate metabolism</keyword>
<keyword id="KW-0961">Cell wall biogenesis/degradation</keyword>
<keyword id="KW-0326">Glycosidase</keyword>
<keyword id="KW-0378">Hydrolase</keyword>
<keyword id="KW-0460">Magnesium</keyword>
<keyword id="KW-0479">Metal-binding</keyword>
<keyword id="KW-0624">Polysaccharide degradation</keyword>
<keyword id="KW-1185">Reference proteome</keyword>
<keyword id="KW-0964">Secreted</keyword>
<comment type="function">
    <text evidence="1 5">Cleaves internal linkages in 1,3-beta-glucan (PubMed:29870811). May contribute to plant biomass degradation (By similarity).</text>
</comment>
<comment type="catalytic activity">
    <reaction evidence="5">
        <text>Hydrolysis of (1-&gt;3)-beta-D-glucosidic linkages in (1-&gt;3)-beta-D-glucans.</text>
        <dbReference type="EC" id="3.2.1.39"/>
    </reaction>
</comment>
<comment type="cofactor">
    <cofactor evidence="5 11">
        <name>Ca(2+)</name>
        <dbReference type="ChEBI" id="CHEBI:29108"/>
    </cofactor>
</comment>
<comment type="cofactor">
    <cofactor evidence="5 11">
        <name>Mg(2+)</name>
        <dbReference type="ChEBI" id="CHEBI:18420"/>
    </cofactor>
</comment>
<comment type="activity regulation">
    <text evidence="5">Inhibited by manganese, zinc, and copper ions.</text>
</comment>
<comment type="biophysicochemical properties">
    <phDependence>
        <text evidence="5">Optimum pH is 7.</text>
    </phDependence>
    <temperatureDependence>
        <text evidence="5">Optimum temperature is 75 degrees Celsius.</text>
    </temperatureDependence>
</comment>
<comment type="subcellular location">
    <subcellularLocation>
        <location evidence="1">Secreted</location>
    </subcellularLocation>
</comment>
<comment type="similarity">
    <text evidence="4 7">Belongs to the glycosyl hydrolase 81 family.</text>
</comment>
<gene>
    <name evidence="6" type="primary">Lam81A</name>
    <name evidence="9" type="ordered locus">Cthe_0660</name>
</gene>
<dbReference type="EC" id="3.2.1.39" evidence="5"/>
<dbReference type="EMBL" id="CP000568">
    <property type="protein sequence ID" value="ABN51895.1"/>
    <property type="molecule type" value="Genomic_DNA"/>
</dbReference>
<dbReference type="RefSeq" id="WP_011837883.1">
    <property type="nucleotide sequence ID" value="NC_009012.1"/>
</dbReference>
<dbReference type="PDB" id="6FOP">
    <property type="method" value="X-ray"/>
    <property type="resolution" value="1.40 A"/>
    <property type="chains" value="A=2-704"/>
</dbReference>
<dbReference type="PDBsum" id="6FOP"/>
<dbReference type="SMR" id="A3DD66"/>
<dbReference type="STRING" id="203119.Cthe_0660"/>
<dbReference type="CAZy" id="GH81">
    <property type="family name" value="Glycoside Hydrolase Family 81"/>
</dbReference>
<dbReference type="GeneID" id="35803377"/>
<dbReference type="KEGG" id="cth:Cthe_0660"/>
<dbReference type="eggNOG" id="COG5498">
    <property type="taxonomic scope" value="Bacteria"/>
</dbReference>
<dbReference type="HOGENOM" id="CLU_005482_1_0_9"/>
<dbReference type="Proteomes" id="UP000002145">
    <property type="component" value="Chromosome"/>
</dbReference>
<dbReference type="GO" id="GO:0005576">
    <property type="term" value="C:extracellular region"/>
    <property type="evidence" value="ECO:0007669"/>
    <property type="project" value="UniProtKB-SubCell"/>
</dbReference>
<dbReference type="GO" id="GO:0005509">
    <property type="term" value="F:calcium ion binding"/>
    <property type="evidence" value="ECO:0000314"/>
    <property type="project" value="UniProtKB"/>
</dbReference>
<dbReference type="GO" id="GO:0052861">
    <property type="term" value="F:endo-1,3(4)-beta-glucanase activity"/>
    <property type="evidence" value="ECO:0007669"/>
    <property type="project" value="InterPro"/>
</dbReference>
<dbReference type="GO" id="GO:0042973">
    <property type="term" value="F:glucan endo-1,3-beta-D-glucosidase activity"/>
    <property type="evidence" value="ECO:0000314"/>
    <property type="project" value="UniProtKB"/>
</dbReference>
<dbReference type="GO" id="GO:0000287">
    <property type="term" value="F:magnesium ion binding"/>
    <property type="evidence" value="ECO:0000314"/>
    <property type="project" value="UniProtKB"/>
</dbReference>
<dbReference type="GO" id="GO:0016151">
    <property type="term" value="F:nickel cation binding"/>
    <property type="evidence" value="ECO:0000314"/>
    <property type="project" value="UniProtKB"/>
</dbReference>
<dbReference type="GO" id="GO:0071555">
    <property type="term" value="P:cell wall organization"/>
    <property type="evidence" value="ECO:0007669"/>
    <property type="project" value="UniProtKB-KW"/>
</dbReference>
<dbReference type="GO" id="GO:0000272">
    <property type="term" value="P:polysaccharide catabolic process"/>
    <property type="evidence" value="ECO:0000314"/>
    <property type="project" value="UniProtKB"/>
</dbReference>
<dbReference type="CDD" id="cd14256">
    <property type="entry name" value="Dockerin_I"/>
    <property type="match status" value="1"/>
</dbReference>
<dbReference type="Gene3D" id="1.10.1330.10">
    <property type="entry name" value="Dockerin domain"/>
    <property type="match status" value="1"/>
</dbReference>
<dbReference type="Gene3D" id="2.70.98.30">
    <property type="entry name" value="Golgi alpha-mannosidase II, domain 4"/>
    <property type="match status" value="1"/>
</dbReference>
<dbReference type="InterPro" id="IPR002105">
    <property type="entry name" value="Dockerin_1_rpt"/>
</dbReference>
<dbReference type="InterPro" id="IPR016134">
    <property type="entry name" value="Dockerin_dom"/>
</dbReference>
<dbReference type="InterPro" id="IPR036439">
    <property type="entry name" value="Dockerin_dom_sf"/>
</dbReference>
<dbReference type="InterPro" id="IPR018247">
    <property type="entry name" value="EF_Hand_1_Ca_BS"/>
</dbReference>
<dbReference type="InterPro" id="IPR005200">
    <property type="entry name" value="Endo-beta-glucanase"/>
</dbReference>
<dbReference type="InterPro" id="IPR040720">
    <property type="entry name" value="GH81_C"/>
</dbReference>
<dbReference type="PANTHER" id="PTHR31983">
    <property type="entry name" value="ENDO-1,3(4)-BETA-GLUCANASE 1"/>
    <property type="match status" value="1"/>
</dbReference>
<dbReference type="PANTHER" id="PTHR31983:SF0">
    <property type="entry name" value="GLUCAN ENDO-1,3-BETA-D-GLUCOSIDASE 2"/>
    <property type="match status" value="1"/>
</dbReference>
<dbReference type="Pfam" id="PF00404">
    <property type="entry name" value="Dockerin_1"/>
    <property type="match status" value="1"/>
</dbReference>
<dbReference type="Pfam" id="PF17652">
    <property type="entry name" value="Glyco_hydro81C"/>
    <property type="match status" value="1"/>
</dbReference>
<dbReference type="SUPFAM" id="SSF63446">
    <property type="entry name" value="Type I dockerin domain"/>
    <property type="match status" value="1"/>
</dbReference>
<dbReference type="PROSITE" id="PS00448">
    <property type="entry name" value="CLOS_CELLULOSOME_RPT"/>
    <property type="match status" value="2"/>
</dbReference>
<dbReference type="PROSITE" id="PS51766">
    <property type="entry name" value="DOCKERIN"/>
    <property type="match status" value="1"/>
</dbReference>
<dbReference type="PROSITE" id="PS00018">
    <property type="entry name" value="EF_HAND_1"/>
    <property type="match status" value="2"/>
</dbReference>
<dbReference type="PROSITE" id="PS52008">
    <property type="entry name" value="GH81"/>
    <property type="match status" value="1"/>
</dbReference>
<organism>
    <name type="scientific">Acetivibrio thermocellus (strain ATCC 27405 / DSM 1237 / JCM 9322 / NBRC 103400 / NCIMB 10682 / NRRL B-4536 / VPI 7372)</name>
    <name type="common">Clostridium thermocellum</name>
    <dbReference type="NCBI Taxonomy" id="203119"/>
    <lineage>
        <taxon>Bacteria</taxon>
        <taxon>Bacillati</taxon>
        <taxon>Bacillota</taxon>
        <taxon>Clostridia</taxon>
        <taxon>Eubacteriales</taxon>
        <taxon>Oscillospiraceae</taxon>
        <taxon>Acetivibrio</taxon>
    </lineage>
</organism>
<evidence type="ECO:0000250" key="1">
    <source>
        <dbReference type="UniProtKB" id="Q47N06"/>
    </source>
</evidence>
<evidence type="ECO:0000250" key="2">
    <source>
        <dbReference type="UniProtKB" id="Q9KG76"/>
    </source>
</evidence>
<evidence type="ECO:0000255" key="3">
    <source>
        <dbReference type="PROSITE-ProRule" id="PRU01102"/>
    </source>
</evidence>
<evidence type="ECO:0000255" key="4">
    <source>
        <dbReference type="PROSITE-ProRule" id="PRU01352"/>
    </source>
</evidence>
<evidence type="ECO:0000269" key="5">
    <source>
    </source>
</evidence>
<evidence type="ECO:0000303" key="6">
    <source>
    </source>
</evidence>
<evidence type="ECO:0000305" key="7"/>
<evidence type="ECO:0000305" key="8">
    <source>
    </source>
</evidence>
<evidence type="ECO:0000312" key="9">
    <source>
        <dbReference type="EMBL" id="ABN51895.1"/>
    </source>
</evidence>
<evidence type="ECO:0000312" key="10">
    <source>
        <dbReference type="Proteomes" id="UP000002145"/>
    </source>
</evidence>
<evidence type="ECO:0007744" key="11">
    <source>
        <dbReference type="PDB" id="6FOP"/>
    </source>
</evidence>
<evidence type="ECO:0007829" key="12">
    <source>
        <dbReference type="PDB" id="6FOP"/>
    </source>
</evidence>
<sequence>MPPGAKVPQAEIYKTSNLQGAVPTNSWESSILWNQYSLPIYAHPLTFKFKAEGIEVGKPALGGSGIAYFGAHKNDFTVGHSSVYTFPDARADKISDFAVDAVMASGSGSIKATLMKGSPYAYFVFTGGNPRIDFSGTPTVFYGDSGSQCLGVTINGVNYGLFAPSGSKWQGIGTGTITCILPAGKNYFSIAVLPDNTVSTLTYYKDYAYCFVTDTKVEWSYNETESTLTTTFTAEVSVKEGTNKGTILALYPHQWRNNPHILPLPYTYSTLRGIMKTIQGTSFKTVYRYHGILPNLPDKGTYDREALNRYINELALQADAPVAVDTYWFGKHLGKLSCALPIAEQLGNISAKDRFISFMKSSLEDWFTAKEGETAKLFYYDSNWGTLIGYPSSYGSDEELNDHHFHYGYFLHAAAQIALRDPQWASRDNWGAMVELLIKDIANWDRNDTRFPFLRNFDPYEGHSWASGHAGFADGNNQESSSEAINAWQAIILWGEATGNKTIRDLGIYLYTTEVEAVCNYWFDLYKDIFSPSYGHNYASMVWGGKYCHEIWWNGTNSEKHGINFLPITAASLYLGKDPNYIKQNYEEMLRECGTSQPPNWKDIQYMYYALYDPAAAKNMWNESIVPEDGESKAHTYHWICNLDSLGLPDFSVTADTPLYSVFNKNNIRTYVVYNASSSAKKVTFSDGKVMTVGPHSMAVSTGSESEVLAGDLNGDGKINSTDISLMKRYLLKQIVDLPVEDDIKAADINKDGKVNSTDMSILKRVILRNYPL</sequence>
<name>ENG1_ACET2</name>
<accession>A3DD66</accession>